<feature type="chain" id="PRO_0000360269" description="NAD(P)H-quinone oxidoreductase subunit 6, chloroplastic">
    <location>
        <begin position="1"/>
        <end position="176"/>
    </location>
</feature>
<feature type="transmembrane region" description="Helical" evidence="2">
    <location>
        <begin position="10"/>
        <end position="30"/>
    </location>
</feature>
<feature type="transmembrane region" description="Helical" evidence="2">
    <location>
        <begin position="32"/>
        <end position="52"/>
    </location>
</feature>
<feature type="transmembrane region" description="Helical" evidence="2">
    <location>
        <begin position="61"/>
        <end position="81"/>
    </location>
</feature>
<feature type="transmembrane region" description="Helical" evidence="2">
    <location>
        <begin position="92"/>
        <end position="112"/>
    </location>
</feature>
<feature type="transmembrane region" description="Helical" evidence="2">
    <location>
        <begin position="152"/>
        <end position="172"/>
    </location>
</feature>
<proteinExistence type="inferred from homology"/>
<accession>Q09WW5</accession>
<gene>
    <name type="primary">ndhG</name>
    <name type="ordered locus">MoinCp074</name>
</gene>
<geneLocation type="chloroplast"/>
<protein>
    <recommendedName>
        <fullName>NAD(P)H-quinone oxidoreductase subunit 6, chloroplastic</fullName>
        <ecNumber>7.1.1.-</ecNumber>
    </recommendedName>
    <alternativeName>
        <fullName>NAD(P)H dehydrogenase subunit 6</fullName>
    </alternativeName>
    <alternativeName>
        <fullName>NADH-plastoquinone oxidoreductase subunit 6</fullName>
    </alternativeName>
</protein>
<dbReference type="EC" id="7.1.1.-"/>
<dbReference type="EMBL" id="DQ226511">
    <property type="protein sequence ID" value="ABB21009.1"/>
    <property type="molecule type" value="Genomic_DNA"/>
</dbReference>
<dbReference type="RefSeq" id="YP_762313.1">
    <property type="nucleotide sequence ID" value="NC_008359.1"/>
</dbReference>
<dbReference type="SMR" id="Q09WW5"/>
<dbReference type="GeneID" id="4290610"/>
<dbReference type="GO" id="GO:0009535">
    <property type="term" value="C:chloroplast thylakoid membrane"/>
    <property type="evidence" value="ECO:0007669"/>
    <property type="project" value="UniProtKB-SubCell"/>
</dbReference>
<dbReference type="GO" id="GO:0008137">
    <property type="term" value="F:NADH dehydrogenase (ubiquinone) activity"/>
    <property type="evidence" value="ECO:0007669"/>
    <property type="project" value="InterPro"/>
</dbReference>
<dbReference type="GO" id="GO:0048038">
    <property type="term" value="F:quinone binding"/>
    <property type="evidence" value="ECO:0007669"/>
    <property type="project" value="UniProtKB-KW"/>
</dbReference>
<dbReference type="FunFam" id="1.20.120.1200:FF:000002">
    <property type="entry name" value="NAD(P)H-quinone oxidoreductase subunit 6, chloroplastic"/>
    <property type="match status" value="1"/>
</dbReference>
<dbReference type="Gene3D" id="1.20.120.1200">
    <property type="entry name" value="NADH-ubiquinone/plastoquinone oxidoreductase chain 6, subunit NuoJ"/>
    <property type="match status" value="1"/>
</dbReference>
<dbReference type="InterPro" id="IPR050290">
    <property type="entry name" value="NAD(P)H-Q_Oxidoreduct_6"/>
</dbReference>
<dbReference type="InterPro" id="IPR001457">
    <property type="entry name" value="NADH_UbQ/plastoQ_OxRdtase_su6"/>
</dbReference>
<dbReference type="InterPro" id="IPR042106">
    <property type="entry name" value="Nuo/plastoQ_OxRdtase_6_NuoJ"/>
</dbReference>
<dbReference type="PANTHER" id="PTHR48479">
    <property type="entry name" value="NAD(P)H-QUINONE OXIDOREDUCTASE SUBUNIT 6, CHLOROPLASTIC"/>
    <property type="match status" value="1"/>
</dbReference>
<dbReference type="PANTHER" id="PTHR48479:SF1">
    <property type="entry name" value="NAD(P)H-QUINONE OXIDOREDUCTASE SUBUNIT 6, CHLOROPLASTIC"/>
    <property type="match status" value="1"/>
</dbReference>
<dbReference type="Pfam" id="PF00499">
    <property type="entry name" value="Oxidored_q3"/>
    <property type="match status" value="1"/>
</dbReference>
<sequence>MDLPGPIHDFLLVFLGLGLILGGIGVVLLTNPIYSAFSLGLVLVCISLLYILSNSYFVAAAQLLIYVGAINVLIIFAVMFMNGSEYYKDFNLWTVGNGFTLLICTSIFGLLITTITDTSWYGIIWTTRSNQIIEHDLISNSQQIGIHLSTDFFLPFEFISIILLAALIGAITVARQ</sequence>
<reference key="1">
    <citation type="submission" date="2005-09" db="EMBL/GenBank/DDBJ databases">
        <title>The chloroplast genome of mulberry: structural features and comparative analysis.</title>
        <authorList>
            <person name="Ravi V."/>
            <person name="Khurana J.P."/>
            <person name="Tyagi A.K."/>
            <person name="Khurana P."/>
        </authorList>
    </citation>
    <scope>NUCLEOTIDE SEQUENCE [LARGE SCALE GENOMIC DNA]</scope>
    <source>
        <strain>cv. K2</strain>
    </source>
</reference>
<name>NU6C_MORIN</name>
<organism>
    <name type="scientific">Morus indica</name>
    <name type="common">Mulberry</name>
    <dbReference type="NCBI Taxonomy" id="248361"/>
    <lineage>
        <taxon>Eukaryota</taxon>
        <taxon>Viridiplantae</taxon>
        <taxon>Streptophyta</taxon>
        <taxon>Embryophyta</taxon>
        <taxon>Tracheophyta</taxon>
        <taxon>Spermatophyta</taxon>
        <taxon>Magnoliopsida</taxon>
        <taxon>eudicotyledons</taxon>
        <taxon>Gunneridae</taxon>
        <taxon>Pentapetalae</taxon>
        <taxon>rosids</taxon>
        <taxon>fabids</taxon>
        <taxon>Rosales</taxon>
        <taxon>Moraceae</taxon>
        <taxon>Moreae</taxon>
        <taxon>Morus</taxon>
    </lineage>
</organism>
<evidence type="ECO:0000250" key="1"/>
<evidence type="ECO:0000255" key="2"/>
<evidence type="ECO:0000305" key="3"/>
<comment type="function">
    <text evidence="1">NDH shuttles electrons from NAD(P)H:plastoquinone, via FMN and iron-sulfur (Fe-S) centers, to quinones in the photosynthetic chain and possibly in a chloroplast respiratory chain. The immediate electron acceptor for the enzyme in this species is believed to be plastoquinone. Couples the redox reaction to proton translocation, and thus conserves the redox energy in a proton gradient (By similarity).</text>
</comment>
<comment type="catalytic activity">
    <reaction>
        <text>a plastoquinone + NADH + (n+1) H(+)(in) = a plastoquinol + NAD(+) + n H(+)(out)</text>
        <dbReference type="Rhea" id="RHEA:42608"/>
        <dbReference type="Rhea" id="RHEA-COMP:9561"/>
        <dbReference type="Rhea" id="RHEA-COMP:9562"/>
        <dbReference type="ChEBI" id="CHEBI:15378"/>
        <dbReference type="ChEBI" id="CHEBI:17757"/>
        <dbReference type="ChEBI" id="CHEBI:57540"/>
        <dbReference type="ChEBI" id="CHEBI:57945"/>
        <dbReference type="ChEBI" id="CHEBI:62192"/>
    </reaction>
</comment>
<comment type="catalytic activity">
    <reaction>
        <text>a plastoquinone + NADPH + (n+1) H(+)(in) = a plastoquinol + NADP(+) + n H(+)(out)</text>
        <dbReference type="Rhea" id="RHEA:42612"/>
        <dbReference type="Rhea" id="RHEA-COMP:9561"/>
        <dbReference type="Rhea" id="RHEA-COMP:9562"/>
        <dbReference type="ChEBI" id="CHEBI:15378"/>
        <dbReference type="ChEBI" id="CHEBI:17757"/>
        <dbReference type="ChEBI" id="CHEBI:57783"/>
        <dbReference type="ChEBI" id="CHEBI:58349"/>
        <dbReference type="ChEBI" id="CHEBI:62192"/>
    </reaction>
</comment>
<comment type="subunit">
    <text evidence="1">NDH is composed of at least 16 different subunits, 5 of which are encoded in the nucleus.</text>
</comment>
<comment type="subcellular location">
    <subcellularLocation>
        <location evidence="1">Plastid</location>
        <location evidence="1">Chloroplast thylakoid membrane</location>
        <topology evidence="1">Multi-pass membrane protein</topology>
    </subcellularLocation>
</comment>
<comment type="similarity">
    <text evidence="3">Belongs to the complex I subunit 6 family.</text>
</comment>
<keyword id="KW-0150">Chloroplast</keyword>
<keyword id="KW-0472">Membrane</keyword>
<keyword id="KW-0520">NAD</keyword>
<keyword id="KW-0521">NADP</keyword>
<keyword id="KW-0934">Plastid</keyword>
<keyword id="KW-0618">Plastoquinone</keyword>
<keyword id="KW-0874">Quinone</keyword>
<keyword id="KW-0793">Thylakoid</keyword>
<keyword id="KW-1278">Translocase</keyword>
<keyword id="KW-0812">Transmembrane</keyword>
<keyword id="KW-1133">Transmembrane helix</keyword>
<keyword id="KW-0813">Transport</keyword>